<comment type="function">
    <text evidence="1">Carrier of the growing fatty acid chain in fatty acid biosynthesis.</text>
</comment>
<comment type="pathway">
    <text evidence="1">Lipid metabolism; fatty acid biosynthesis.</text>
</comment>
<comment type="subcellular location">
    <subcellularLocation>
        <location evidence="1">Cytoplasm</location>
    </subcellularLocation>
</comment>
<comment type="PTM">
    <text evidence="1">4'-phosphopantetheine is transferred from CoA to a specific serine of apo-ACP by AcpS. This modification is essential for activity because fatty acids are bound in thioester linkage to the sulfhydryl of the prosthetic group.</text>
</comment>
<comment type="similarity">
    <text evidence="1">Belongs to the acyl carrier protein (ACP) family.</text>
</comment>
<reference key="1">
    <citation type="journal article" date="2007" name="J. Bacteriol.">
        <title>The complete genome sequence of Roseobacter denitrificans reveals a mixotrophic rather than photosynthetic metabolism.</title>
        <authorList>
            <person name="Swingley W.D."/>
            <person name="Sadekar S."/>
            <person name="Mastrian S.D."/>
            <person name="Matthies H.J."/>
            <person name="Hao J."/>
            <person name="Ramos H."/>
            <person name="Acharya C.R."/>
            <person name="Conrad A.L."/>
            <person name="Taylor H.L."/>
            <person name="Dejesa L.C."/>
            <person name="Shah M.K."/>
            <person name="O'Huallachain M.E."/>
            <person name="Lince M.T."/>
            <person name="Blankenship R.E."/>
            <person name="Beatty J.T."/>
            <person name="Touchman J.W."/>
        </authorList>
    </citation>
    <scope>NUCLEOTIDE SEQUENCE [LARGE SCALE GENOMIC DNA]</scope>
    <source>
        <strain>ATCC 33942 / OCh 114</strain>
    </source>
</reference>
<proteinExistence type="inferred from homology"/>
<keyword id="KW-0963">Cytoplasm</keyword>
<keyword id="KW-0275">Fatty acid biosynthesis</keyword>
<keyword id="KW-0276">Fatty acid metabolism</keyword>
<keyword id="KW-0444">Lipid biosynthesis</keyword>
<keyword id="KW-0443">Lipid metabolism</keyword>
<keyword id="KW-0596">Phosphopantetheine</keyword>
<keyword id="KW-0597">Phosphoprotein</keyword>
<keyword id="KW-1185">Reference proteome</keyword>
<name>ACP_ROSDO</name>
<evidence type="ECO:0000255" key="1">
    <source>
        <dbReference type="HAMAP-Rule" id="MF_01217"/>
    </source>
</evidence>
<evidence type="ECO:0000255" key="2">
    <source>
        <dbReference type="PROSITE-ProRule" id="PRU00258"/>
    </source>
</evidence>
<protein>
    <recommendedName>
        <fullName evidence="1">Acyl carrier protein</fullName>
        <shortName evidence="1">ACP</shortName>
    </recommendedName>
</protein>
<gene>
    <name evidence="1" type="primary">acpP</name>
    <name type="ordered locus">RD1_3038</name>
</gene>
<accession>Q164P2</accession>
<sequence length="77" mass="8364">MSDIADRVKKIVVEHLGVEEDKVVESASFIDDLGADSLDTVELVMAFEEEFGIEIPDDAAETIQTFGDAVKFISDAS</sequence>
<organism>
    <name type="scientific">Roseobacter denitrificans (strain ATCC 33942 / OCh 114)</name>
    <name type="common">Erythrobacter sp. (strain OCh 114)</name>
    <name type="synonym">Roseobacter denitrificans</name>
    <dbReference type="NCBI Taxonomy" id="375451"/>
    <lineage>
        <taxon>Bacteria</taxon>
        <taxon>Pseudomonadati</taxon>
        <taxon>Pseudomonadota</taxon>
        <taxon>Alphaproteobacteria</taxon>
        <taxon>Rhodobacterales</taxon>
        <taxon>Roseobacteraceae</taxon>
        <taxon>Roseobacter</taxon>
    </lineage>
</organism>
<feature type="chain" id="PRO_1000066682" description="Acyl carrier protein">
    <location>
        <begin position="1"/>
        <end position="77"/>
    </location>
</feature>
<feature type="domain" description="Carrier" evidence="2">
    <location>
        <begin position="2"/>
        <end position="77"/>
    </location>
</feature>
<feature type="modified residue" description="O-(pantetheine 4'-phosphoryl)serine" evidence="2">
    <location>
        <position position="37"/>
    </location>
</feature>
<dbReference type="EMBL" id="CP000362">
    <property type="protein sequence ID" value="ABG32551.1"/>
    <property type="molecule type" value="Genomic_DNA"/>
</dbReference>
<dbReference type="RefSeq" id="WP_011569167.1">
    <property type="nucleotide sequence ID" value="NC_008209.1"/>
</dbReference>
<dbReference type="SMR" id="Q164P2"/>
<dbReference type="STRING" id="375451.RD1_3038"/>
<dbReference type="KEGG" id="rde:RD1_3038"/>
<dbReference type="eggNOG" id="COG0236">
    <property type="taxonomic scope" value="Bacteria"/>
</dbReference>
<dbReference type="HOGENOM" id="CLU_108696_5_1_5"/>
<dbReference type="OrthoDB" id="9804551at2"/>
<dbReference type="UniPathway" id="UPA00094"/>
<dbReference type="Proteomes" id="UP000007029">
    <property type="component" value="Chromosome"/>
</dbReference>
<dbReference type="GO" id="GO:0005829">
    <property type="term" value="C:cytosol"/>
    <property type="evidence" value="ECO:0007669"/>
    <property type="project" value="TreeGrafter"/>
</dbReference>
<dbReference type="GO" id="GO:0016020">
    <property type="term" value="C:membrane"/>
    <property type="evidence" value="ECO:0007669"/>
    <property type="project" value="GOC"/>
</dbReference>
<dbReference type="GO" id="GO:0000035">
    <property type="term" value="F:acyl binding"/>
    <property type="evidence" value="ECO:0007669"/>
    <property type="project" value="TreeGrafter"/>
</dbReference>
<dbReference type="GO" id="GO:0000036">
    <property type="term" value="F:acyl carrier activity"/>
    <property type="evidence" value="ECO:0007669"/>
    <property type="project" value="UniProtKB-UniRule"/>
</dbReference>
<dbReference type="GO" id="GO:0031177">
    <property type="term" value="F:phosphopantetheine binding"/>
    <property type="evidence" value="ECO:0007669"/>
    <property type="project" value="InterPro"/>
</dbReference>
<dbReference type="GO" id="GO:0009245">
    <property type="term" value="P:lipid A biosynthetic process"/>
    <property type="evidence" value="ECO:0007669"/>
    <property type="project" value="TreeGrafter"/>
</dbReference>
<dbReference type="FunFam" id="1.10.1200.10:FF:000001">
    <property type="entry name" value="Acyl carrier protein"/>
    <property type="match status" value="1"/>
</dbReference>
<dbReference type="Gene3D" id="1.10.1200.10">
    <property type="entry name" value="ACP-like"/>
    <property type="match status" value="1"/>
</dbReference>
<dbReference type="HAMAP" id="MF_01217">
    <property type="entry name" value="Acyl_carrier"/>
    <property type="match status" value="1"/>
</dbReference>
<dbReference type="InterPro" id="IPR003231">
    <property type="entry name" value="ACP"/>
</dbReference>
<dbReference type="InterPro" id="IPR036736">
    <property type="entry name" value="ACP-like_sf"/>
</dbReference>
<dbReference type="InterPro" id="IPR020806">
    <property type="entry name" value="PKS_PP-bd"/>
</dbReference>
<dbReference type="InterPro" id="IPR009081">
    <property type="entry name" value="PP-bd_ACP"/>
</dbReference>
<dbReference type="InterPro" id="IPR006162">
    <property type="entry name" value="Ppantetheine_attach_site"/>
</dbReference>
<dbReference type="NCBIfam" id="TIGR00517">
    <property type="entry name" value="acyl_carrier"/>
    <property type="match status" value="1"/>
</dbReference>
<dbReference type="NCBIfam" id="NF002148">
    <property type="entry name" value="PRK00982.1-2"/>
    <property type="match status" value="1"/>
</dbReference>
<dbReference type="NCBIfam" id="NF002149">
    <property type="entry name" value="PRK00982.1-3"/>
    <property type="match status" value="1"/>
</dbReference>
<dbReference type="NCBIfam" id="NF002150">
    <property type="entry name" value="PRK00982.1-4"/>
    <property type="match status" value="1"/>
</dbReference>
<dbReference type="NCBIfam" id="NF002151">
    <property type="entry name" value="PRK00982.1-5"/>
    <property type="match status" value="1"/>
</dbReference>
<dbReference type="PANTHER" id="PTHR20863">
    <property type="entry name" value="ACYL CARRIER PROTEIN"/>
    <property type="match status" value="1"/>
</dbReference>
<dbReference type="PANTHER" id="PTHR20863:SF76">
    <property type="entry name" value="CARRIER DOMAIN-CONTAINING PROTEIN"/>
    <property type="match status" value="1"/>
</dbReference>
<dbReference type="Pfam" id="PF00550">
    <property type="entry name" value="PP-binding"/>
    <property type="match status" value="1"/>
</dbReference>
<dbReference type="SMART" id="SM00823">
    <property type="entry name" value="PKS_PP"/>
    <property type="match status" value="1"/>
</dbReference>
<dbReference type="SUPFAM" id="SSF47336">
    <property type="entry name" value="ACP-like"/>
    <property type="match status" value="1"/>
</dbReference>
<dbReference type="PROSITE" id="PS50075">
    <property type="entry name" value="CARRIER"/>
    <property type="match status" value="1"/>
</dbReference>
<dbReference type="PROSITE" id="PS00012">
    <property type="entry name" value="PHOSPHOPANTETHEINE"/>
    <property type="match status" value="1"/>
</dbReference>